<feature type="chain" id="PRO_1000189129" description="Isoleucine--tRNA ligase">
    <location>
        <begin position="1"/>
        <end position="921"/>
    </location>
</feature>
<feature type="short sequence motif" description="'HIGH' region">
    <location>
        <begin position="57"/>
        <end position="67"/>
    </location>
</feature>
<feature type="short sequence motif" description="'KMSKS' region">
    <location>
        <begin position="593"/>
        <end position="597"/>
    </location>
</feature>
<feature type="binding site" evidence="1">
    <location>
        <position position="552"/>
    </location>
    <ligand>
        <name>L-isoleucyl-5'-AMP</name>
        <dbReference type="ChEBI" id="CHEBI:178002"/>
    </ligand>
</feature>
<feature type="binding site" evidence="1">
    <location>
        <position position="596"/>
    </location>
    <ligand>
        <name>ATP</name>
        <dbReference type="ChEBI" id="CHEBI:30616"/>
    </ligand>
</feature>
<feature type="binding site" evidence="1">
    <location>
        <position position="888"/>
    </location>
    <ligand>
        <name>Zn(2+)</name>
        <dbReference type="ChEBI" id="CHEBI:29105"/>
    </ligand>
</feature>
<feature type="binding site" evidence="1">
    <location>
        <position position="891"/>
    </location>
    <ligand>
        <name>Zn(2+)</name>
        <dbReference type="ChEBI" id="CHEBI:29105"/>
    </ligand>
</feature>
<feature type="binding site" evidence="1">
    <location>
        <position position="908"/>
    </location>
    <ligand>
        <name>Zn(2+)</name>
        <dbReference type="ChEBI" id="CHEBI:29105"/>
    </ligand>
</feature>
<feature type="binding site" evidence="1">
    <location>
        <position position="911"/>
    </location>
    <ligand>
        <name>Zn(2+)</name>
        <dbReference type="ChEBI" id="CHEBI:29105"/>
    </ligand>
</feature>
<accession>A9VTD5</accession>
<sequence length="921" mass="104479">MEYKNTLLMPKTEFPMRGNLPKREPAMQEKWAEMNIYEKVQEHTKGRPLFVLHDGPPYANGDIHMGHALNKVLKDFIVRFKSMTGYCAPYVPGWDTHGLPIEQALTNKGVKRKEMTVAEFRKLCAEYAYEQVERQREQFKRLGVRADWDNPYITLEPAYEAQQIKVFGDMAKKGYIYKGQKPVYWSPTSESALAEAEIEYQDKKSASIYVAFPVKDGKNVLEGDEKYIIWTTTPWTLPANLGISVHPELEYAIVKVNDEKYIIASELFETVAKTLEWENAEVVKTVKGSELEYTVAKHPFYDRDSLVMLGEHVTTDAGTGCVHTAPGHGEDDFVVGKKYGLEVLCPVDDKGVLTNEAPGFEGLFYDKANKPITEKLEEVGALLKLTFITHSYPHDWRTKKPIIFRATAQWFASIEAFRKELLEAVAETKWVPAWGETRLHNMVRDRGDWCISRQRAWGVPIPVFYAENGDPIITDETINHVADLFREHGSNVWFEREAKDLLPEGFTHTGSPNGEFRKETDIMDVWFDSGSSHQAVLEEREDLQRPADLYLEGSDQYRGWFNSSLSTAVAVTGKAPYKGVLSHGFVLDGEGRKMSKSIGNIVVPKKIMDQLGGDILRLWVSSVDYQSDVRISDDILKQVAEVYRKIRNTFRFLLGNLDDFNPSENTVAVAELREVDRYMLVKLNDLITKVKDAYETYDFAAVYHAIHNFCTIDLSSFYLDFAKDILYIEGADHADRRAIQTVLYDVLVALTKLVTPILPHTADEVWPYVPGAEEESVQLTNMPEATEVEGSEALRAKWDAFMTLRDDVLKALEVARNEKVIGKSLNASITLYPTAEMKAMLESISEDLKQLFIVSEYKLGGTIEEAPTEAPKYEHTAVVVAQATGETCERCWVVSETIGKDAEHETLCERCATVVKENYVK</sequence>
<proteinExistence type="inferred from homology"/>
<evidence type="ECO:0000255" key="1">
    <source>
        <dbReference type="HAMAP-Rule" id="MF_02002"/>
    </source>
</evidence>
<protein>
    <recommendedName>
        <fullName evidence="1">Isoleucine--tRNA ligase</fullName>
        <ecNumber evidence="1">6.1.1.5</ecNumber>
    </recommendedName>
    <alternativeName>
        <fullName evidence="1">Isoleucyl-tRNA synthetase</fullName>
        <shortName evidence="1">IleRS</shortName>
    </alternativeName>
</protein>
<comment type="function">
    <text evidence="1">Catalyzes the attachment of isoleucine to tRNA(Ile). As IleRS can inadvertently accommodate and process structurally similar amino acids such as valine, to avoid such errors it has two additional distinct tRNA(Ile)-dependent editing activities. One activity is designated as 'pretransfer' editing and involves the hydrolysis of activated Val-AMP. The other activity is designated 'posttransfer' editing and involves deacylation of mischarged Val-tRNA(Ile).</text>
</comment>
<comment type="catalytic activity">
    <reaction evidence="1">
        <text>tRNA(Ile) + L-isoleucine + ATP = L-isoleucyl-tRNA(Ile) + AMP + diphosphate</text>
        <dbReference type="Rhea" id="RHEA:11060"/>
        <dbReference type="Rhea" id="RHEA-COMP:9666"/>
        <dbReference type="Rhea" id="RHEA-COMP:9695"/>
        <dbReference type="ChEBI" id="CHEBI:30616"/>
        <dbReference type="ChEBI" id="CHEBI:33019"/>
        <dbReference type="ChEBI" id="CHEBI:58045"/>
        <dbReference type="ChEBI" id="CHEBI:78442"/>
        <dbReference type="ChEBI" id="CHEBI:78528"/>
        <dbReference type="ChEBI" id="CHEBI:456215"/>
        <dbReference type="EC" id="6.1.1.5"/>
    </reaction>
</comment>
<comment type="cofactor">
    <cofactor evidence="1">
        <name>Zn(2+)</name>
        <dbReference type="ChEBI" id="CHEBI:29105"/>
    </cofactor>
    <text evidence="1">Binds 1 zinc ion per subunit.</text>
</comment>
<comment type="subunit">
    <text evidence="1">Monomer.</text>
</comment>
<comment type="subcellular location">
    <subcellularLocation>
        <location evidence="1">Cytoplasm</location>
    </subcellularLocation>
</comment>
<comment type="domain">
    <text evidence="1">IleRS has two distinct active sites: one for aminoacylation and one for editing. The misactivated valine is translocated from the active site to the editing site, which sterically excludes the correctly activated isoleucine. The single editing site contains two valyl binding pockets, one specific for each substrate (Val-AMP or Val-tRNA(Ile)).</text>
</comment>
<comment type="similarity">
    <text evidence="1">Belongs to the class-I aminoacyl-tRNA synthetase family. IleS type 1 subfamily.</text>
</comment>
<reference key="1">
    <citation type="journal article" date="2008" name="Chem. Biol. Interact.">
        <title>Extending the Bacillus cereus group genomics to putative food-borne pathogens of different toxicity.</title>
        <authorList>
            <person name="Lapidus A."/>
            <person name="Goltsman E."/>
            <person name="Auger S."/>
            <person name="Galleron N."/>
            <person name="Segurens B."/>
            <person name="Dossat C."/>
            <person name="Land M.L."/>
            <person name="Broussolle V."/>
            <person name="Brillard J."/>
            <person name="Guinebretiere M.-H."/>
            <person name="Sanchis V."/>
            <person name="Nguen-the C."/>
            <person name="Lereclus D."/>
            <person name="Richardson P."/>
            <person name="Wincker P."/>
            <person name="Weissenbach J."/>
            <person name="Ehrlich S.D."/>
            <person name="Sorokin A."/>
        </authorList>
    </citation>
    <scope>NUCLEOTIDE SEQUENCE [LARGE SCALE GENOMIC DNA]</scope>
    <source>
        <strain>KBAB4</strain>
    </source>
</reference>
<keyword id="KW-0030">Aminoacyl-tRNA synthetase</keyword>
<keyword id="KW-0067">ATP-binding</keyword>
<keyword id="KW-0963">Cytoplasm</keyword>
<keyword id="KW-0436">Ligase</keyword>
<keyword id="KW-0479">Metal-binding</keyword>
<keyword id="KW-0547">Nucleotide-binding</keyword>
<keyword id="KW-0648">Protein biosynthesis</keyword>
<keyword id="KW-0862">Zinc</keyword>
<gene>
    <name evidence="1" type="primary">ileS</name>
    <name type="ordered locus">BcerKBAB4_3722</name>
</gene>
<name>SYI_BACMK</name>
<organism>
    <name type="scientific">Bacillus mycoides (strain KBAB4)</name>
    <name type="common">Bacillus weihenstephanensis</name>
    <dbReference type="NCBI Taxonomy" id="315730"/>
    <lineage>
        <taxon>Bacteria</taxon>
        <taxon>Bacillati</taxon>
        <taxon>Bacillota</taxon>
        <taxon>Bacilli</taxon>
        <taxon>Bacillales</taxon>
        <taxon>Bacillaceae</taxon>
        <taxon>Bacillus</taxon>
        <taxon>Bacillus cereus group</taxon>
    </lineage>
</organism>
<dbReference type="EC" id="6.1.1.5" evidence="1"/>
<dbReference type="EMBL" id="CP000903">
    <property type="protein sequence ID" value="ABY44891.1"/>
    <property type="molecule type" value="Genomic_DNA"/>
</dbReference>
<dbReference type="SMR" id="A9VTD5"/>
<dbReference type="KEGG" id="bwe:BcerKBAB4_3722"/>
<dbReference type="eggNOG" id="COG0060">
    <property type="taxonomic scope" value="Bacteria"/>
</dbReference>
<dbReference type="HOGENOM" id="CLU_001493_7_1_9"/>
<dbReference type="Proteomes" id="UP000002154">
    <property type="component" value="Chromosome"/>
</dbReference>
<dbReference type="GO" id="GO:0005829">
    <property type="term" value="C:cytosol"/>
    <property type="evidence" value="ECO:0007669"/>
    <property type="project" value="TreeGrafter"/>
</dbReference>
<dbReference type="GO" id="GO:0002161">
    <property type="term" value="F:aminoacyl-tRNA deacylase activity"/>
    <property type="evidence" value="ECO:0007669"/>
    <property type="project" value="InterPro"/>
</dbReference>
<dbReference type="GO" id="GO:0005524">
    <property type="term" value="F:ATP binding"/>
    <property type="evidence" value="ECO:0007669"/>
    <property type="project" value="UniProtKB-UniRule"/>
</dbReference>
<dbReference type="GO" id="GO:0004822">
    <property type="term" value="F:isoleucine-tRNA ligase activity"/>
    <property type="evidence" value="ECO:0007669"/>
    <property type="project" value="UniProtKB-UniRule"/>
</dbReference>
<dbReference type="GO" id="GO:0000049">
    <property type="term" value="F:tRNA binding"/>
    <property type="evidence" value="ECO:0007669"/>
    <property type="project" value="InterPro"/>
</dbReference>
<dbReference type="GO" id="GO:0008270">
    <property type="term" value="F:zinc ion binding"/>
    <property type="evidence" value="ECO:0007669"/>
    <property type="project" value="UniProtKB-UniRule"/>
</dbReference>
<dbReference type="GO" id="GO:0006428">
    <property type="term" value="P:isoleucyl-tRNA aminoacylation"/>
    <property type="evidence" value="ECO:0007669"/>
    <property type="project" value="UniProtKB-UniRule"/>
</dbReference>
<dbReference type="CDD" id="cd07960">
    <property type="entry name" value="Anticodon_Ia_Ile_BEm"/>
    <property type="match status" value="1"/>
</dbReference>
<dbReference type="CDD" id="cd00818">
    <property type="entry name" value="IleRS_core"/>
    <property type="match status" value="1"/>
</dbReference>
<dbReference type="FunFam" id="1.10.10.830:FF:000001">
    <property type="entry name" value="Isoleucine--tRNA ligase"/>
    <property type="match status" value="1"/>
</dbReference>
<dbReference type="FunFam" id="1.10.730.20:FF:000001">
    <property type="entry name" value="Isoleucine--tRNA ligase"/>
    <property type="match status" value="1"/>
</dbReference>
<dbReference type="FunFam" id="3.40.50.620:FF:000152">
    <property type="entry name" value="Isoleucine--tRNA ligase"/>
    <property type="match status" value="1"/>
</dbReference>
<dbReference type="FunFam" id="3.90.740.10:FF:000006">
    <property type="entry name" value="Isoleucine--tRNA ligase"/>
    <property type="match status" value="1"/>
</dbReference>
<dbReference type="Gene3D" id="1.10.730.20">
    <property type="match status" value="1"/>
</dbReference>
<dbReference type="Gene3D" id="3.40.50.620">
    <property type="entry name" value="HUPs"/>
    <property type="match status" value="2"/>
</dbReference>
<dbReference type="Gene3D" id="1.10.10.830">
    <property type="entry name" value="Ile-tRNA synthetase CP2 domain-like"/>
    <property type="match status" value="1"/>
</dbReference>
<dbReference type="Gene3D" id="3.90.740.10">
    <property type="entry name" value="Valyl/Leucyl/Isoleucyl-tRNA synthetase, editing domain"/>
    <property type="match status" value="1"/>
</dbReference>
<dbReference type="HAMAP" id="MF_02002">
    <property type="entry name" value="Ile_tRNA_synth_type1"/>
    <property type="match status" value="1"/>
</dbReference>
<dbReference type="InterPro" id="IPR001412">
    <property type="entry name" value="aa-tRNA-synth_I_CS"/>
</dbReference>
<dbReference type="InterPro" id="IPR002300">
    <property type="entry name" value="aa-tRNA-synth_Ia"/>
</dbReference>
<dbReference type="InterPro" id="IPR033708">
    <property type="entry name" value="Anticodon_Ile_BEm"/>
</dbReference>
<dbReference type="InterPro" id="IPR002301">
    <property type="entry name" value="Ile-tRNA-ligase"/>
</dbReference>
<dbReference type="InterPro" id="IPR023585">
    <property type="entry name" value="Ile-tRNA-ligase_type1"/>
</dbReference>
<dbReference type="InterPro" id="IPR050081">
    <property type="entry name" value="Ile-tRNA_ligase"/>
</dbReference>
<dbReference type="InterPro" id="IPR013155">
    <property type="entry name" value="M/V/L/I-tRNA-synth_anticd-bd"/>
</dbReference>
<dbReference type="InterPro" id="IPR014729">
    <property type="entry name" value="Rossmann-like_a/b/a_fold"/>
</dbReference>
<dbReference type="InterPro" id="IPR009080">
    <property type="entry name" value="tRNAsynth_Ia_anticodon-bd"/>
</dbReference>
<dbReference type="InterPro" id="IPR009008">
    <property type="entry name" value="Val/Leu/Ile-tRNA-synth_edit"/>
</dbReference>
<dbReference type="InterPro" id="IPR010663">
    <property type="entry name" value="Znf_FPG/IleRS"/>
</dbReference>
<dbReference type="NCBIfam" id="TIGR00392">
    <property type="entry name" value="ileS"/>
    <property type="match status" value="1"/>
</dbReference>
<dbReference type="PANTHER" id="PTHR42765:SF1">
    <property type="entry name" value="ISOLEUCINE--TRNA LIGASE, MITOCHONDRIAL"/>
    <property type="match status" value="1"/>
</dbReference>
<dbReference type="PANTHER" id="PTHR42765">
    <property type="entry name" value="SOLEUCYL-TRNA SYNTHETASE"/>
    <property type="match status" value="1"/>
</dbReference>
<dbReference type="Pfam" id="PF08264">
    <property type="entry name" value="Anticodon_1"/>
    <property type="match status" value="1"/>
</dbReference>
<dbReference type="Pfam" id="PF00133">
    <property type="entry name" value="tRNA-synt_1"/>
    <property type="match status" value="1"/>
</dbReference>
<dbReference type="Pfam" id="PF06827">
    <property type="entry name" value="zf-FPG_IleRS"/>
    <property type="match status" value="1"/>
</dbReference>
<dbReference type="PRINTS" id="PR00984">
    <property type="entry name" value="TRNASYNTHILE"/>
</dbReference>
<dbReference type="SUPFAM" id="SSF47323">
    <property type="entry name" value="Anticodon-binding domain of a subclass of class I aminoacyl-tRNA synthetases"/>
    <property type="match status" value="1"/>
</dbReference>
<dbReference type="SUPFAM" id="SSF52374">
    <property type="entry name" value="Nucleotidylyl transferase"/>
    <property type="match status" value="1"/>
</dbReference>
<dbReference type="SUPFAM" id="SSF50677">
    <property type="entry name" value="ValRS/IleRS/LeuRS editing domain"/>
    <property type="match status" value="1"/>
</dbReference>
<dbReference type="PROSITE" id="PS00178">
    <property type="entry name" value="AA_TRNA_LIGASE_I"/>
    <property type="match status" value="1"/>
</dbReference>